<sequence>MARAVGIDLGTTNSVVAVLEGGEPTVIANAEGARTTPSVVAFAKSGEVLVGEVAKRQAVTNVDRTIRSVKRHMGTDWLTKIDDKDFTPQQISAFVLQKLKRDAEAYLGEPVTDAVITVPAYFSDAQRQATKEAGEIAGLNVSRIVNEPTAAALAYGLDKGDDQTILVFDLGGGTFDVSLLEIGEGVVEVKATSGDNHLGGDDWDARIVDWMVKKFKDNNGVDLAADKIAKQRLQEAAEKAKIELSSSSETTIHLPYITHGESGPLHFEEKLTRSEFQRLTTDLLDRTKGPFQSVLKDGGVAIKDIDHVVLVGGSTRMPAVTEVVKELLGGKEPNKGVNPDEVVAVGAALQAGVLKGEVKDVLLLDVTPLSLGIETKGGVMTTLIERNTTIPTKRSEIFTTADDNQPSVEIKVAQGERQMWAQNQPLGNFELTGLPPAPRGIPKIEVTFDIDANGIVHVTAKDQASGKEQSMTISGGSALGKDEIDRMVREAEQYAEEDAKRREAVETRNQAEQLVYTTEKFLDENSDKLPDDVKTEVRADVDALKVTLEKEDASADDIRAGVTKLGESSQKMGAAMYAAAEADSAAAGGSAGATGESDDDVVDAEIVDEGGADDGAEGESK</sequence>
<dbReference type="EMBL" id="CP000509">
    <property type="protein sequence ID" value="ABL83860.1"/>
    <property type="molecule type" value="Genomic_DNA"/>
</dbReference>
<dbReference type="RefSeq" id="WP_011757789.1">
    <property type="nucleotide sequence ID" value="NC_008699.1"/>
</dbReference>
<dbReference type="SMR" id="A1SPX5"/>
<dbReference type="STRING" id="196162.Noca_4363"/>
<dbReference type="KEGG" id="nca:Noca_4363"/>
<dbReference type="eggNOG" id="COG0443">
    <property type="taxonomic scope" value="Bacteria"/>
</dbReference>
<dbReference type="HOGENOM" id="CLU_005965_2_1_11"/>
<dbReference type="OrthoDB" id="9766019at2"/>
<dbReference type="Proteomes" id="UP000000640">
    <property type="component" value="Chromosome"/>
</dbReference>
<dbReference type="GO" id="GO:0005524">
    <property type="term" value="F:ATP binding"/>
    <property type="evidence" value="ECO:0007669"/>
    <property type="project" value="UniProtKB-UniRule"/>
</dbReference>
<dbReference type="GO" id="GO:0140662">
    <property type="term" value="F:ATP-dependent protein folding chaperone"/>
    <property type="evidence" value="ECO:0007669"/>
    <property type="project" value="InterPro"/>
</dbReference>
<dbReference type="GO" id="GO:0051082">
    <property type="term" value="F:unfolded protein binding"/>
    <property type="evidence" value="ECO:0007669"/>
    <property type="project" value="InterPro"/>
</dbReference>
<dbReference type="CDD" id="cd10234">
    <property type="entry name" value="ASKHA_NBD_HSP70_DnaK-like"/>
    <property type="match status" value="1"/>
</dbReference>
<dbReference type="FunFam" id="2.60.34.10:FF:000014">
    <property type="entry name" value="Chaperone protein DnaK HSP70"/>
    <property type="match status" value="1"/>
</dbReference>
<dbReference type="FunFam" id="1.20.1270.10:FF:000001">
    <property type="entry name" value="Molecular chaperone DnaK"/>
    <property type="match status" value="1"/>
</dbReference>
<dbReference type="FunFam" id="3.30.420.40:FF:000071">
    <property type="entry name" value="Molecular chaperone DnaK"/>
    <property type="match status" value="1"/>
</dbReference>
<dbReference type="FunFam" id="3.90.640.10:FF:000003">
    <property type="entry name" value="Molecular chaperone DnaK"/>
    <property type="match status" value="1"/>
</dbReference>
<dbReference type="Gene3D" id="1.20.1270.10">
    <property type="match status" value="1"/>
</dbReference>
<dbReference type="Gene3D" id="3.30.30.30">
    <property type="match status" value="1"/>
</dbReference>
<dbReference type="Gene3D" id="3.30.420.40">
    <property type="match status" value="3"/>
</dbReference>
<dbReference type="Gene3D" id="3.90.640.10">
    <property type="entry name" value="Actin, Chain A, domain 4"/>
    <property type="match status" value="1"/>
</dbReference>
<dbReference type="Gene3D" id="2.60.34.10">
    <property type="entry name" value="Substrate Binding Domain Of DNAk, Chain A, domain 1"/>
    <property type="match status" value="1"/>
</dbReference>
<dbReference type="HAMAP" id="MF_00332">
    <property type="entry name" value="DnaK"/>
    <property type="match status" value="1"/>
</dbReference>
<dbReference type="InterPro" id="IPR043129">
    <property type="entry name" value="ATPase_NBD"/>
</dbReference>
<dbReference type="InterPro" id="IPR012725">
    <property type="entry name" value="Chaperone_DnaK"/>
</dbReference>
<dbReference type="InterPro" id="IPR018181">
    <property type="entry name" value="Heat_shock_70_CS"/>
</dbReference>
<dbReference type="InterPro" id="IPR029048">
    <property type="entry name" value="HSP70_C_sf"/>
</dbReference>
<dbReference type="InterPro" id="IPR029047">
    <property type="entry name" value="HSP70_peptide-bd_sf"/>
</dbReference>
<dbReference type="InterPro" id="IPR013126">
    <property type="entry name" value="Hsp_70_fam"/>
</dbReference>
<dbReference type="NCBIfam" id="NF001413">
    <property type="entry name" value="PRK00290.1"/>
    <property type="match status" value="1"/>
</dbReference>
<dbReference type="NCBIfam" id="TIGR02350">
    <property type="entry name" value="prok_dnaK"/>
    <property type="match status" value="1"/>
</dbReference>
<dbReference type="PANTHER" id="PTHR19375">
    <property type="entry name" value="HEAT SHOCK PROTEIN 70KDA"/>
    <property type="match status" value="1"/>
</dbReference>
<dbReference type="Pfam" id="PF00012">
    <property type="entry name" value="HSP70"/>
    <property type="match status" value="1"/>
</dbReference>
<dbReference type="PRINTS" id="PR00301">
    <property type="entry name" value="HEATSHOCK70"/>
</dbReference>
<dbReference type="SUPFAM" id="SSF53067">
    <property type="entry name" value="Actin-like ATPase domain"/>
    <property type="match status" value="2"/>
</dbReference>
<dbReference type="SUPFAM" id="SSF100934">
    <property type="entry name" value="Heat shock protein 70kD (HSP70), C-terminal subdomain"/>
    <property type="match status" value="1"/>
</dbReference>
<dbReference type="SUPFAM" id="SSF100920">
    <property type="entry name" value="Heat shock protein 70kD (HSP70), peptide-binding domain"/>
    <property type="match status" value="1"/>
</dbReference>
<dbReference type="PROSITE" id="PS00297">
    <property type="entry name" value="HSP70_1"/>
    <property type="match status" value="1"/>
</dbReference>
<dbReference type="PROSITE" id="PS00329">
    <property type="entry name" value="HSP70_2"/>
    <property type="match status" value="1"/>
</dbReference>
<dbReference type="PROSITE" id="PS01036">
    <property type="entry name" value="HSP70_3"/>
    <property type="match status" value="1"/>
</dbReference>
<comment type="function">
    <text evidence="1">Acts as a chaperone.</text>
</comment>
<comment type="induction">
    <text evidence="1">By stress conditions e.g. heat shock.</text>
</comment>
<comment type="similarity">
    <text evidence="1">Belongs to the heat shock protein 70 family.</text>
</comment>
<evidence type="ECO:0000255" key="1">
    <source>
        <dbReference type="HAMAP-Rule" id="MF_00332"/>
    </source>
</evidence>
<evidence type="ECO:0000256" key="2">
    <source>
        <dbReference type="SAM" id="MobiDB-lite"/>
    </source>
</evidence>
<protein>
    <recommendedName>
        <fullName evidence="1">Chaperone protein DnaK</fullName>
    </recommendedName>
    <alternativeName>
        <fullName evidence="1">HSP70</fullName>
    </alternativeName>
    <alternativeName>
        <fullName evidence="1">Heat shock 70 kDa protein</fullName>
    </alternativeName>
    <alternativeName>
        <fullName evidence="1">Heat shock protein 70</fullName>
    </alternativeName>
</protein>
<gene>
    <name evidence="1" type="primary">dnaK</name>
    <name type="ordered locus">Noca_4363</name>
</gene>
<reference key="1">
    <citation type="submission" date="2006-12" db="EMBL/GenBank/DDBJ databases">
        <title>Complete sequence of chromosome 1 of Nocardioides sp. JS614.</title>
        <authorList>
            <person name="Copeland A."/>
            <person name="Lucas S."/>
            <person name="Lapidus A."/>
            <person name="Barry K."/>
            <person name="Detter J.C."/>
            <person name="Glavina del Rio T."/>
            <person name="Hammon N."/>
            <person name="Israni S."/>
            <person name="Dalin E."/>
            <person name="Tice H."/>
            <person name="Pitluck S."/>
            <person name="Thompson L.S."/>
            <person name="Brettin T."/>
            <person name="Bruce D."/>
            <person name="Han C."/>
            <person name="Tapia R."/>
            <person name="Schmutz J."/>
            <person name="Larimer F."/>
            <person name="Land M."/>
            <person name="Hauser L."/>
            <person name="Kyrpides N."/>
            <person name="Kim E."/>
            <person name="Mattes T."/>
            <person name="Gossett J."/>
            <person name="Richardson P."/>
        </authorList>
    </citation>
    <scope>NUCLEOTIDE SEQUENCE [LARGE SCALE GENOMIC DNA]</scope>
    <source>
        <strain>ATCC BAA-499 / JS614</strain>
    </source>
</reference>
<keyword id="KW-0067">ATP-binding</keyword>
<keyword id="KW-0143">Chaperone</keyword>
<keyword id="KW-0547">Nucleotide-binding</keyword>
<keyword id="KW-0597">Phosphoprotein</keyword>
<keyword id="KW-1185">Reference proteome</keyword>
<keyword id="KW-0346">Stress response</keyword>
<proteinExistence type="inferred from homology"/>
<organism>
    <name type="scientific">Nocardioides sp. (strain ATCC BAA-499 / JS614)</name>
    <dbReference type="NCBI Taxonomy" id="196162"/>
    <lineage>
        <taxon>Bacteria</taxon>
        <taxon>Bacillati</taxon>
        <taxon>Actinomycetota</taxon>
        <taxon>Actinomycetes</taxon>
        <taxon>Propionibacteriales</taxon>
        <taxon>Nocardioidaceae</taxon>
        <taxon>Nocardioides</taxon>
    </lineage>
</organism>
<accession>A1SPX5</accession>
<feature type="chain" id="PRO_1000059620" description="Chaperone protein DnaK">
    <location>
        <begin position="1"/>
        <end position="621"/>
    </location>
</feature>
<feature type="region of interest" description="Disordered" evidence="2">
    <location>
        <begin position="580"/>
        <end position="621"/>
    </location>
</feature>
<feature type="compositionally biased region" description="Acidic residues" evidence="2">
    <location>
        <begin position="596"/>
        <end position="621"/>
    </location>
</feature>
<feature type="modified residue" description="Phosphothreonine; by autocatalysis" evidence="1">
    <location>
        <position position="174"/>
    </location>
</feature>
<name>DNAK_NOCSJ</name>